<dbReference type="EC" id="3.4.21.-"/>
<dbReference type="EMBL" id="DQ164401">
    <property type="protein sequence ID" value="ABA42115.1"/>
    <property type="molecule type" value="mRNA"/>
</dbReference>
<dbReference type="SMR" id="Q2QA04"/>
<dbReference type="MEROPS" id="S01.348"/>
<dbReference type="GO" id="GO:0005576">
    <property type="term" value="C:extracellular region"/>
    <property type="evidence" value="ECO:0007669"/>
    <property type="project" value="UniProtKB-SubCell"/>
</dbReference>
<dbReference type="GO" id="GO:0030141">
    <property type="term" value="C:secretory granule"/>
    <property type="evidence" value="ECO:0007669"/>
    <property type="project" value="TreeGrafter"/>
</dbReference>
<dbReference type="GO" id="GO:0004252">
    <property type="term" value="F:serine-type endopeptidase activity"/>
    <property type="evidence" value="ECO:0007669"/>
    <property type="project" value="InterPro"/>
</dbReference>
<dbReference type="GO" id="GO:0090729">
    <property type="term" value="F:toxin activity"/>
    <property type="evidence" value="ECO:0007669"/>
    <property type="project" value="UniProtKB-KW"/>
</dbReference>
<dbReference type="GO" id="GO:0006508">
    <property type="term" value="P:proteolysis"/>
    <property type="evidence" value="ECO:0007669"/>
    <property type="project" value="UniProtKB-KW"/>
</dbReference>
<dbReference type="CDD" id="cd00190">
    <property type="entry name" value="Tryp_SPc"/>
    <property type="match status" value="1"/>
</dbReference>
<dbReference type="FunFam" id="2.40.10.10:FF:000158">
    <property type="entry name" value="Thrombin-like enzyme saxthrombin"/>
    <property type="match status" value="1"/>
</dbReference>
<dbReference type="Gene3D" id="2.40.10.10">
    <property type="entry name" value="Trypsin-like serine proteases"/>
    <property type="match status" value="2"/>
</dbReference>
<dbReference type="InterPro" id="IPR009003">
    <property type="entry name" value="Peptidase_S1_PA"/>
</dbReference>
<dbReference type="InterPro" id="IPR043504">
    <property type="entry name" value="Peptidase_S1_PA_chymotrypsin"/>
</dbReference>
<dbReference type="InterPro" id="IPR001314">
    <property type="entry name" value="Peptidase_S1A"/>
</dbReference>
<dbReference type="InterPro" id="IPR001254">
    <property type="entry name" value="Trypsin_dom"/>
</dbReference>
<dbReference type="InterPro" id="IPR018114">
    <property type="entry name" value="TRYPSIN_HIS"/>
</dbReference>
<dbReference type="InterPro" id="IPR033116">
    <property type="entry name" value="TRYPSIN_SER"/>
</dbReference>
<dbReference type="PANTHER" id="PTHR24271:SF47">
    <property type="entry name" value="KALLIKREIN-1"/>
    <property type="match status" value="1"/>
</dbReference>
<dbReference type="PANTHER" id="PTHR24271">
    <property type="entry name" value="KALLIKREIN-RELATED"/>
    <property type="match status" value="1"/>
</dbReference>
<dbReference type="Pfam" id="PF00089">
    <property type="entry name" value="Trypsin"/>
    <property type="match status" value="1"/>
</dbReference>
<dbReference type="PRINTS" id="PR00722">
    <property type="entry name" value="CHYMOTRYPSIN"/>
</dbReference>
<dbReference type="SMART" id="SM00020">
    <property type="entry name" value="Tryp_SPc"/>
    <property type="match status" value="1"/>
</dbReference>
<dbReference type="SUPFAM" id="SSF50494">
    <property type="entry name" value="Trypsin-like serine proteases"/>
    <property type="match status" value="1"/>
</dbReference>
<dbReference type="PROSITE" id="PS50240">
    <property type="entry name" value="TRYPSIN_DOM"/>
    <property type="match status" value="1"/>
</dbReference>
<dbReference type="PROSITE" id="PS00134">
    <property type="entry name" value="TRYPSIN_HIS"/>
    <property type="match status" value="1"/>
</dbReference>
<dbReference type="PROSITE" id="PS00135">
    <property type="entry name" value="TRYPSIN_SER"/>
    <property type="match status" value="1"/>
</dbReference>
<reference key="1">
    <citation type="submission" date="2005-08" db="EMBL/GenBank/DDBJ databases">
        <title>Crotalus durissus durissus snake venom serine proteinase.</title>
        <authorList>
            <person name="Azofeifa G."/>
            <person name="Arce V."/>
            <person name="Alape A."/>
            <person name="Flores M."/>
        </authorList>
    </citation>
    <scope>NUCLEOTIDE SEQUENCE [MRNA]</scope>
    <source>
        <tissue>Venom gland</tissue>
    </source>
</reference>
<proteinExistence type="evidence at transcript level"/>
<comment type="function">
    <text evidence="1">Snake venom serine protease that may act in the hemostasis system of the prey.</text>
</comment>
<comment type="subunit">
    <text evidence="1">Monomer.</text>
</comment>
<comment type="subcellular location">
    <subcellularLocation>
        <location evidence="1">Secreted</location>
    </subcellularLocation>
</comment>
<comment type="tissue specificity">
    <text>Expressed by the venom gland.</text>
</comment>
<comment type="similarity">
    <text evidence="3">Belongs to the peptidase S1 family. Snake venom subfamily.</text>
</comment>
<organism>
    <name type="scientific">Crotalus durissus durissus</name>
    <name type="common">Central American rattlesnake</name>
    <dbReference type="NCBI Taxonomy" id="31150"/>
    <lineage>
        <taxon>Eukaryota</taxon>
        <taxon>Metazoa</taxon>
        <taxon>Chordata</taxon>
        <taxon>Craniata</taxon>
        <taxon>Vertebrata</taxon>
        <taxon>Euteleostomi</taxon>
        <taxon>Lepidosauria</taxon>
        <taxon>Squamata</taxon>
        <taxon>Bifurcata</taxon>
        <taxon>Unidentata</taxon>
        <taxon>Episquamata</taxon>
        <taxon>Toxicofera</taxon>
        <taxon>Serpentes</taxon>
        <taxon>Colubroidea</taxon>
        <taxon>Viperidae</taxon>
        <taxon>Crotalinae</taxon>
        <taxon>Crotalus</taxon>
    </lineage>
</organism>
<feature type="signal peptide" evidence="2">
    <location>
        <begin position="1"/>
        <end position="18"/>
    </location>
</feature>
<feature type="propeptide" id="PRO_0000294996" evidence="1">
    <location>
        <begin position="19"/>
        <end position="24"/>
    </location>
</feature>
<feature type="chain" id="PRO_0000294997" description="Snake venom serine protease">
    <location>
        <begin position="25"/>
        <end position="262"/>
    </location>
</feature>
<feature type="domain" description="Peptidase S1" evidence="3">
    <location>
        <begin position="25"/>
        <end position="253"/>
    </location>
</feature>
<feature type="active site" description="Charge relay system" evidence="1">
    <location>
        <position position="65"/>
    </location>
</feature>
<feature type="active site" description="Charge relay system" evidence="1">
    <location>
        <position position="114"/>
    </location>
</feature>
<feature type="active site" description="Charge relay system" evidence="1">
    <location>
        <position position="208"/>
    </location>
</feature>
<feature type="glycosylation site" description="N-linked (GlcNAc...) asparagine" evidence="2">
    <location>
        <position position="125"/>
    </location>
</feature>
<feature type="glycosylation site" description="N-linked (GlcNAc...) asparagine" evidence="2">
    <location>
        <position position="158"/>
    </location>
</feature>
<feature type="disulfide bond" evidence="3">
    <location>
        <begin position="31"/>
        <end position="167"/>
    </location>
</feature>
<feature type="disulfide bond" evidence="3">
    <location>
        <begin position="50"/>
        <end position="66"/>
    </location>
</feature>
<feature type="disulfide bond" evidence="3">
    <location>
        <begin position="102"/>
        <end position="260"/>
    </location>
</feature>
<feature type="disulfide bond" evidence="3">
    <location>
        <begin position="146"/>
        <end position="214"/>
    </location>
</feature>
<feature type="disulfide bond" evidence="3">
    <location>
        <begin position="178"/>
        <end position="193"/>
    </location>
</feature>
<feature type="disulfide bond" evidence="3">
    <location>
        <begin position="204"/>
        <end position="229"/>
    </location>
</feature>
<keyword id="KW-1015">Disulfide bond</keyword>
<keyword id="KW-0325">Glycoprotein</keyword>
<keyword id="KW-1199">Hemostasis impairing toxin</keyword>
<keyword id="KW-0378">Hydrolase</keyword>
<keyword id="KW-0645">Protease</keyword>
<keyword id="KW-0964">Secreted</keyword>
<keyword id="KW-0720">Serine protease</keyword>
<keyword id="KW-0732">Signal</keyword>
<keyword id="KW-0800">Toxin</keyword>
<keyword id="KW-0865">Zymogen</keyword>
<evidence type="ECO:0000250" key="1"/>
<evidence type="ECO:0000255" key="2"/>
<evidence type="ECO:0000255" key="3">
    <source>
        <dbReference type="PROSITE-ProRule" id="PRU00274"/>
    </source>
</evidence>
<accession>Q2QA04</accession>
<name>VSP_CRODD</name>
<sequence>MVLIRVLANLLILQLSYAQKSSELVIGGDECNINEHRSLALVYITSGFLCGGTLINKEWVLTAAHCDRGDILVLLGVHRLKDVQTGVSKDVQTRVAKEKFICPNRKKDDEKDKDIMLIRMDSPVNISTHIAPLSLPSNPPSVGSVCRIMGWGAITSPNVTLPGVPHCADINIFDYEVCRAAKPELPVTSRTLCAGILEGGKGSCDGDSGGPLICNGEIQGIVSWGGDICAQPREPEPYTKVFDYTEWIQSIIAGNTDATCPP</sequence>
<protein>
    <recommendedName>
        <fullName>Snake venom serine protease</fullName>
        <shortName>SVSP</shortName>
        <ecNumber>3.4.21.-</ecNumber>
    </recommendedName>
</protein>